<protein>
    <recommendedName>
        <fullName>Iron uptake protein A2</fullName>
    </recommendedName>
    <alternativeName>
        <fullName>Iron deficiency-induced protein A</fullName>
    </alternativeName>
    <alternativeName>
        <fullName>PP2</fullName>
    </alternativeName>
</protein>
<evidence type="ECO:0000255" key="1">
    <source>
        <dbReference type="PROSITE-ProRule" id="PRU00648"/>
    </source>
</evidence>
<evidence type="ECO:0000269" key="2">
    <source>
    </source>
</evidence>
<evidence type="ECO:0000269" key="3">
    <source>
    </source>
</evidence>
<evidence type="ECO:0000269" key="4">
    <source>
    </source>
</evidence>
<evidence type="ECO:0000305" key="5"/>
<evidence type="ECO:0007829" key="6">
    <source>
        <dbReference type="PDB" id="2VOZ"/>
    </source>
</evidence>
<keyword id="KW-0002">3D-structure</keyword>
<keyword id="KW-0903">Direct protein sequencing</keyword>
<keyword id="KW-0406">Ion transport</keyword>
<keyword id="KW-0408">Iron</keyword>
<keyword id="KW-0410">Iron transport</keyword>
<keyword id="KW-0472">Membrane</keyword>
<keyword id="KW-0479">Metal-binding</keyword>
<keyword id="KW-0574">Periplasm</keyword>
<keyword id="KW-1185">Reference proteome</keyword>
<keyword id="KW-0732">Signal</keyword>
<keyword id="KW-0793">Thylakoid</keyword>
<keyword id="KW-0813">Transport</keyword>
<name>FUTA2_SYNY3</name>
<sequence>MTTKISRRTFFVGGTALTALVVANLPRRASAQSRTINLYSSRHYNTDDALYDAFGEVNLIEASAEELIERIQSEGANSPGDILFTVDAGMLWRAEQAGLFQPVRSGKLNERIPENLRHPDGLWYGFTQRARVLYYSRDRVNPADLSTYEALADPQWRGKILVRPSSNVYNLSLTASRIAIHGEPETRRWLQGLVGNFARQPEGNDTAQIRAIAAGIGDVAIANSYYYIRLQKSTDPADQEVVEKVSLFFPNTGSGERGTHVNVSGAGVLKNAPNRDAAIAFLEYLASDDAQRYFAEGNNEYPVIPGVPIDPVLAAHGQLKGDPLNVSNLGRYQPDSARLMNEVGWQ</sequence>
<comment type="function">
    <text evidence="5">Probably part of a periplasmic ABC transporter complex futA1A2BC (TC 3.A.1.10.2) involved in Fe(3+) ion import (ferric iron). This protein and futA1 (slr1295) are subunit proteins that have redundant or overlapping substrate-binding functions (Probable). The differing subcellular locations of futA1 (predominantly thylakoid lumen) and futA2 (predominantly periplasmic) suggest they may fulfill different roles.</text>
</comment>
<comment type="function">
    <text evidence="5">Plays an important role in protecting the acceptor side of photosystem II (PSII) against oxidative damage, especially under iron-limiting growth conditions.</text>
</comment>
<comment type="function">
    <text>Plays an undefined role in copper supply to thylakoid proteins.</text>
</comment>
<comment type="subcellular location">
    <subcellularLocation>
        <location evidence="5">Cellular thylakoid membrane</location>
        <topology evidence="5">Peripheral membrane protein</topology>
        <orientation evidence="5">Lumenal side</orientation>
    </subcellularLocation>
    <subcellularLocation>
        <location>Periplasm</location>
    </subcellularLocation>
    <text>Binds Fe(3+) in the periplasm.</text>
</comment>
<comment type="induction">
    <text evidence="2 3 4">Transcript levels increase when cells are grown in the absence of iron. Periplasmic levels increase when cells are grown in high NaCl or in the absence of iron.</text>
</comment>
<comment type="PTM">
    <text>Predicted to be exported by the Tat system. The position of the signal peptide cleavage has not been experimentally proven.</text>
</comment>
<comment type="disruption phenotype">
    <text evidence="3">Cells grow normally in the absence of iron; double knockouts of this gene and futA1 (slr1295) grow very poorly in the absence of iron and have a marked reduction in their ability to take up Fe(3+).</text>
</comment>
<comment type="similarity">
    <text evidence="5">Belongs to the bacterial solute-binding protein 1 family.</text>
</comment>
<comment type="caution">
    <text evidence="5">There is some controversy as to whether this protein preferentially binds Fe(2+) or Fe(3+).</text>
</comment>
<organism>
    <name type="scientific">Synechocystis sp. (strain ATCC 27184 / PCC 6803 / Kazusa)</name>
    <dbReference type="NCBI Taxonomy" id="1111708"/>
    <lineage>
        <taxon>Bacteria</taxon>
        <taxon>Bacillati</taxon>
        <taxon>Cyanobacteriota</taxon>
        <taxon>Cyanophyceae</taxon>
        <taxon>Synechococcales</taxon>
        <taxon>Merismopediaceae</taxon>
        <taxon>Synechocystis</taxon>
    </lineage>
</organism>
<proteinExistence type="evidence at protein level"/>
<feature type="signal peptide" description="Tat-type signal" evidence="1">
    <location>
        <begin position="1"/>
        <end position="31"/>
    </location>
</feature>
<feature type="chain" id="PRO_0000352736" description="Iron uptake protein A2">
    <location>
        <begin position="32"/>
        <end position="346"/>
    </location>
</feature>
<feature type="binding site">
    <location>
        <position position="43"/>
    </location>
    <ligand>
        <name>Fe cation</name>
        <dbReference type="ChEBI" id="CHEBI:24875"/>
    </ligand>
</feature>
<feature type="binding site">
    <location>
        <position position="44"/>
    </location>
    <ligand>
        <name>Fe cation</name>
        <dbReference type="ChEBI" id="CHEBI:24875"/>
    </ligand>
</feature>
<feature type="binding site">
    <location>
        <position position="169"/>
    </location>
    <ligand>
        <name>Fe cation</name>
        <dbReference type="ChEBI" id="CHEBI:24875"/>
    </ligand>
</feature>
<feature type="binding site">
    <location>
        <position position="225"/>
    </location>
    <ligand>
        <name>Fe cation</name>
        <dbReference type="ChEBI" id="CHEBI:24875"/>
    </ligand>
</feature>
<feature type="binding site">
    <location>
        <position position="226"/>
    </location>
    <ligand>
        <name>Fe cation</name>
        <dbReference type="ChEBI" id="CHEBI:24875"/>
    </ligand>
</feature>
<feature type="strand" evidence="6">
    <location>
        <begin position="35"/>
        <end position="41"/>
    </location>
</feature>
<feature type="helix" evidence="6">
    <location>
        <begin position="47"/>
        <end position="54"/>
    </location>
</feature>
<feature type="strand" evidence="6">
    <location>
        <begin position="55"/>
        <end position="61"/>
    </location>
</feature>
<feature type="helix" evidence="6">
    <location>
        <begin position="64"/>
        <end position="73"/>
    </location>
</feature>
<feature type="helix" evidence="6">
    <location>
        <begin position="75"/>
        <end position="77"/>
    </location>
</feature>
<feature type="strand" evidence="6">
    <location>
        <begin position="81"/>
        <end position="87"/>
    </location>
</feature>
<feature type="helix" evidence="6">
    <location>
        <begin position="88"/>
        <end position="96"/>
    </location>
</feature>
<feature type="helix" evidence="6">
    <location>
        <begin position="106"/>
        <end position="111"/>
    </location>
</feature>
<feature type="helix" evidence="6">
    <location>
        <begin position="114"/>
        <end position="116"/>
    </location>
</feature>
<feature type="strand" evidence="6">
    <location>
        <begin position="124"/>
        <end position="136"/>
    </location>
</feature>
<feature type="turn" evidence="6">
    <location>
        <begin position="137"/>
        <end position="139"/>
    </location>
</feature>
<feature type="helix" evidence="6">
    <location>
        <begin position="142"/>
        <end position="144"/>
    </location>
</feature>
<feature type="helix" evidence="6">
    <location>
        <begin position="149"/>
        <end position="152"/>
    </location>
</feature>
<feature type="helix" evidence="6">
    <location>
        <begin position="154"/>
        <end position="156"/>
    </location>
</feature>
<feature type="turn" evidence="6">
    <location>
        <begin position="157"/>
        <end position="159"/>
    </location>
</feature>
<feature type="helix" evidence="6">
    <location>
        <begin position="168"/>
        <end position="181"/>
    </location>
</feature>
<feature type="helix" evidence="6">
    <location>
        <begin position="183"/>
        <end position="195"/>
    </location>
</feature>
<feature type="strand" evidence="6">
    <location>
        <begin position="197"/>
        <end position="200"/>
    </location>
</feature>
<feature type="helix" evidence="6">
    <location>
        <begin position="205"/>
        <end position="213"/>
    </location>
</feature>
<feature type="strand" evidence="6">
    <location>
        <begin position="218"/>
        <end position="223"/>
    </location>
</feature>
<feature type="helix" evidence="6">
    <location>
        <begin position="224"/>
        <end position="232"/>
    </location>
</feature>
<feature type="helix" evidence="6">
    <location>
        <begin position="236"/>
        <end position="244"/>
    </location>
</feature>
<feature type="strand" evidence="6">
    <location>
        <begin position="245"/>
        <end position="248"/>
    </location>
</feature>
<feature type="strand" evidence="6">
    <location>
        <begin position="261"/>
        <end position="269"/>
    </location>
</feature>
<feature type="helix" evidence="6">
    <location>
        <begin position="275"/>
        <end position="285"/>
    </location>
</feature>
<feature type="helix" evidence="6">
    <location>
        <begin position="288"/>
        <end position="296"/>
    </location>
</feature>
<feature type="turn" evidence="6">
    <location>
        <begin position="297"/>
        <end position="299"/>
    </location>
</feature>
<feature type="strand" evidence="6">
    <location>
        <begin position="301"/>
        <end position="304"/>
    </location>
</feature>
<feature type="helix" evidence="6">
    <location>
        <begin position="311"/>
        <end position="314"/>
    </location>
</feature>
<feature type="helix" evidence="6">
    <location>
        <begin position="327"/>
        <end position="331"/>
    </location>
</feature>
<feature type="helix" evidence="6">
    <location>
        <begin position="333"/>
        <end position="342"/>
    </location>
</feature>
<dbReference type="EMBL" id="BA000022">
    <property type="protein sequence ID" value="BAA10591.1"/>
    <property type="molecule type" value="Genomic_DNA"/>
</dbReference>
<dbReference type="PIR" id="S76647">
    <property type="entry name" value="S76647"/>
</dbReference>
<dbReference type="PDB" id="2VOZ">
    <property type="method" value="X-ray"/>
    <property type="resolution" value="1.70 A"/>
    <property type="chains" value="A/B=1-346"/>
</dbReference>
<dbReference type="PDB" id="2VP1">
    <property type="method" value="X-ray"/>
    <property type="resolution" value="2.70 A"/>
    <property type="chains" value="A/B=1-346"/>
</dbReference>
<dbReference type="PDBsum" id="2VOZ"/>
<dbReference type="PDBsum" id="2VP1"/>
<dbReference type="SMR" id="Q55835"/>
<dbReference type="IntAct" id="Q55835">
    <property type="interactions" value="1"/>
</dbReference>
<dbReference type="STRING" id="1148.gene:10500095"/>
<dbReference type="TCDB" id="3.A.1.10.2">
    <property type="family name" value="the atp-binding cassette (abc) superfamily"/>
</dbReference>
<dbReference type="PaxDb" id="1148-1001753"/>
<dbReference type="EnsemblBacteria" id="BAA10591">
    <property type="protein sequence ID" value="BAA10591"/>
    <property type="gene ID" value="BAA10591"/>
</dbReference>
<dbReference type="KEGG" id="syn:slr0513"/>
<dbReference type="eggNOG" id="COG1840">
    <property type="taxonomic scope" value="Bacteria"/>
</dbReference>
<dbReference type="InParanoid" id="Q55835"/>
<dbReference type="PhylomeDB" id="Q55835"/>
<dbReference type="EvolutionaryTrace" id="Q55835"/>
<dbReference type="Proteomes" id="UP000001425">
    <property type="component" value="Chromosome"/>
</dbReference>
<dbReference type="GO" id="GO:0030288">
    <property type="term" value="C:outer membrane-bounded periplasmic space"/>
    <property type="evidence" value="ECO:0007005"/>
    <property type="project" value="UniProtKB"/>
</dbReference>
<dbReference type="GO" id="GO:0031676">
    <property type="term" value="C:plasma membrane-derived thylakoid membrane"/>
    <property type="evidence" value="ECO:0007669"/>
    <property type="project" value="UniProtKB-SubCell"/>
</dbReference>
<dbReference type="GO" id="GO:0046872">
    <property type="term" value="F:metal ion binding"/>
    <property type="evidence" value="ECO:0007669"/>
    <property type="project" value="UniProtKB-KW"/>
</dbReference>
<dbReference type="GO" id="GO:0006826">
    <property type="term" value="P:iron ion transport"/>
    <property type="evidence" value="ECO:0007669"/>
    <property type="project" value="UniProtKB-KW"/>
</dbReference>
<dbReference type="CDD" id="cd13542">
    <property type="entry name" value="PBP2_FutA1_ilke"/>
    <property type="match status" value="1"/>
</dbReference>
<dbReference type="Gene3D" id="3.40.190.10">
    <property type="entry name" value="Periplasmic binding protein-like II"/>
    <property type="match status" value="2"/>
</dbReference>
<dbReference type="InterPro" id="IPR026045">
    <property type="entry name" value="Ferric-bd"/>
</dbReference>
<dbReference type="InterPro" id="IPR006059">
    <property type="entry name" value="SBP"/>
</dbReference>
<dbReference type="InterPro" id="IPR006311">
    <property type="entry name" value="TAT_signal"/>
</dbReference>
<dbReference type="PANTHER" id="PTHR30006:SF15">
    <property type="entry name" value="IRON-UTILIZATION PERIPLASMIC PROTEIN"/>
    <property type="match status" value="1"/>
</dbReference>
<dbReference type="PANTHER" id="PTHR30006">
    <property type="entry name" value="THIAMINE-BINDING PERIPLASMIC PROTEIN-RELATED"/>
    <property type="match status" value="1"/>
</dbReference>
<dbReference type="Pfam" id="PF13416">
    <property type="entry name" value="SBP_bac_8"/>
    <property type="match status" value="1"/>
</dbReference>
<dbReference type="PIRSF" id="PIRSF002825">
    <property type="entry name" value="CfbpA"/>
    <property type="match status" value="1"/>
</dbReference>
<dbReference type="SUPFAM" id="SSF53850">
    <property type="entry name" value="Periplasmic binding protein-like II"/>
    <property type="match status" value="1"/>
</dbReference>
<dbReference type="PROSITE" id="PS51318">
    <property type="entry name" value="TAT"/>
    <property type="match status" value="1"/>
</dbReference>
<gene>
    <name type="primary">futA2</name>
    <name type="synonym">idiA</name>
    <name type="ordered locus">slr0513</name>
</gene>
<reference key="1">
    <citation type="journal article" date="1996" name="DNA Res.">
        <title>Sequence analysis of the genome of the unicellular cyanobacterium Synechocystis sp. strain PCC6803. II. Sequence determination of the entire genome and assignment of potential protein-coding regions.</title>
        <authorList>
            <person name="Kaneko T."/>
            <person name="Sato S."/>
            <person name="Kotani H."/>
            <person name="Tanaka A."/>
            <person name="Asamizu E."/>
            <person name="Nakamura Y."/>
            <person name="Miyajima N."/>
            <person name="Hirosawa M."/>
            <person name="Sugiura M."/>
            <person name="Sasamoto S."/>
            <person name="Kimura T."/>
            <person name="Hosouchi T."/>
            <person name="Matsuno A."/>
            <person name="Muraki A."/>
            <person name="Nakazaki N."/>
            <person name="Naruo K."/>
            <person name="Okumura S."/>
            <person name="Shimpo S."/>
            <person name="Takeuchi C."/>
            <person name="Wada T."/>
            <person name="Watanabe A."/>
            <person name="Yamada M."/>
            <person name="Yasuda M."/>
            <person name="Tabata S."/>
        </authorList>
    </citation>
    <scope>NUCLEOTIDE SEQUENCE [LARGE SCALE GENOMIC DNA]</scope>
    <source>
        <strain>ATCC 27184 / PCC 6803 / Kazusa</strain>
    </source>
</reference>
<reference key="2">
    <citation type="journal article" date="1999" name="Arch. Microbiol.">
        <title>Isolation of salt-induced periplasmic proteins from Synechocystis sp. strain PCC 6803.</title>
        <authorList>
            <person name="Fulda S."/>
            <person name="Mikkat S."/>
            <person name="Schroeder W."/>
            <person name="Hagemann M."/>
        </authorList>
    </citation>
    <scope>PROTEIN SEQUENCE OF 140-155 AND 178-188</scope>
    <scope>SUBCELLULAR LOCATION IN PERIPLASM</scope>
</reference>
<reference key="3">
    <citation type="journal article" date="2000" name="Eur. J. Biochem.">
        <title>Proteomics of Synechocystis sp. strain PCC 6803. Identification of periplasmic proteins in cells grown at low and high salt concentrations.</title>
        <authorList>
            <person name="Fulda S."/>
            <person name="Huang F."/>
            <person name="Nilsson F."/>
            <person name="Hagemann M."/>
            <person name="Norling B."/>
        </authorList>
    </citation>
    <scope>SUBCELLULAR LOCATION IN PERIPLASM</scope>
    <scope>INDUCTION</scope>
</reference>
<reference key="4">
    <citation type="journal article" date="2001" name="J. Bacteriol.">
        <title>Genes essential to iron transport in the cyanobacterium Synechocystis sp. strain PCC 6803.</title>
        <authorList>
            <person name="Katoh H."/>
            <person name="Hagino N."/>
            <person name="Grossman A.R."/>
            <person name="Ogawa T."/>
        </authorList>
    </citation>
    <scope>ROLE IN IRON TRANSPORT (FE(3+))</scope>
    <scope>DISRUPTION PHENOTYPE</scope>
    <scope>INDUCTION</scope>
</reference>
<reference key="5">
    <citation type="journal article" date="2002" name="Microbiology">
        <title>Localization and function of the IdiA homologue Slr1295 in the cyanobacterium Synechocystis sp. strain PCC 6803.</title>
        <authorList>
            <person name="Toelle J."/>
            <person name="Michel K.-P."/>
            <person name="Kruip J."/>
            <person name="Kahmann U."/>
            <person name="Preisfeld A."/>
            <person name="Pistorius E.K."/>
        </authorList>
    </citation>
    <scope>INDUCTION</scope>
    <scope>SUBCELLULAR LOCATION IN PERIPLASM AND THYLAKOID LUMEN</scope>
</reference>
<reference key="6">
    <citation type="journal article" date="2005" name="Proteomics">
        <title>Proteomic studies of the thylakoid membrane of Synechocystis sp. PCC 6803.</title>
        <authorList>
            <person name="Srivastava R."/>
            <person name="Pisareva T."/>
            <person name="Norling B."/>
        </authorList>
    </citation>
    <scope>SUBCELLULAR LOCATION IN THYLAKOID LUMEN</scope>
</reference>
<reference key="7">
    <citation type="journal article" date="2007" name="J. Biol. Chem.">
        <title>A periplasmic iron-binding protein contributes toward inward copper supply.</title>
        <authorList>
            <person name="Waldron K.J."/>
            <person name="Tottey S."/>
            <person name="Yanagisawa S."/>
            <person name="Dennison C."/>
            <person name="Robinson N.J."/>
        </authorList>
    </citation>
    <scope>IRON-BINDING IN THE PERIPLASM (FE(3+))</scope>
    <scope>ROLE IN COPPER SUPPLY FOR THYLAKOID PROTEINS</scope>
</reference>
<reference key="8">
    <citation type="journal article" date="2007" name="J. Biol. Chem.">
        <title>The structure of the iron-binding protein, FutA1, from Synechocystis 6803.</title>
        <authorList>
            <person name="Koropatkin N."/>
            <person name="Randich A.M."/>
            <person name="Bhattacharyya-Pakrasi M."/>
            <person name="Pakrasi H.B."/>
            <person name="Smith T.J."/>
        </authorList>
    </citation>
    <scope>BINDING OF FE(2+)</scope>
</reference>
<reference key="9">
    <citation type="journal article" date="2008" name="J. Biol. Chem.">
        <title>FutA2 is a ferric binding protein from Synechocystis PCC 6803.</title>
        <authorList>
            <person name="Badarau A."/>
            <person name="Firbank S.J."/>
            <person name="Waldron K.J."/>
            <person name="Yanagisawa S."/>
            <person name="Robinson N.J."/>
            <person name="Banfield M.J."/>
            <person name="Dennison C."/>
        </authorList>
    </citation>
    <scope>X-RAY CRYSTALLOGRAPHY (1.7 ANGSTROMS) OF 32-346 IN THE PRESENCE AND ABSENCE OF FE(3+)</scope>
    <scope>PREFERENCE FOR FE(3+) OVER FE(2+)</scope>
</reference>
<accession>Q55835</accession>